<organism>
    <name type="scientific">Branchiostoma floridae</name>
    <name type="common">Florida lancelet</name>
    <name type="synonym">Amphioxus</name>
    <dbReference type="NCBI Taxonomy" id="7739"/>
    <lineage>
        <taxon>Eukaryota</taxon>
        <taxon>Metazoa</taxon>
        <taxon>Chordata</taxon>
        <taxon>Cephalochordata</taxon>
        <taxon>Leptocardii</taxon>
        <taxon>Amphioxiformes</taxon>
        <taxon>Branchiostomatidae</taxon>
        <taxon>Branchiostoma</taxon>
    </lineage>
</organism>
<name>NO66_BRAFL</name>
<dbReference type="EC" id="1.14.11.-"/>
<dbReference type="EC" id="1.14.11.27"/>
<dbReference type="EMBL" id="GG666456">
    <property type="protein sequence ID" value="EEN69449.1"/>
    <property type="molecule type" value="Genomic_DNA"/>
</dbReference>
<dbReference type="RefSeq" id="XP_002613440.1">
    <property type="nucleotide sequence ID" value="XM_002613394.1"/>
</dbReference>
<dbReference type="SMR" id="C3XRY1"/>
<dbReference type="FunCoup" id="C3XRY1">
    <property type="interactions" value="327"/>
</dbReference>
<dbReference type="STRING" id="7739.C3XRY1"/>
<dbReference type="eggNOG" id="KOG3706">
    <property type="taxonomic scope" value="Eukaryota"/>
</dbReference>
<dbReference type="InParanoid" id="C3XRY1"/>
<dbReference type="Proteomes" id="UP000001554">
    <property type="component" value="Unplaced"/>
</dbReference>
<dbReference type="GO" id="GO:0005730">
    <property type="term" value="C:nucleolus"/>
    <property type="evidence" value="ECO:0000318"/>
    <property type="project" value="GO_Central"/>
</dbReference>
<dbReference type="GO" id="GO:0005634">
    <property type="term" value="C:nucleus"/>
    <property type="evidence" value="ECO:0000250"/>
    <property type="project" value="UniProtKB"/>
</dbReference>
<dbReference type="GO" id="GO:0016706">
    <property type="term" value="F:2-oxoglutarate-dependent dioxygenase activity"/>
    <property type="evidence" value="ECO:0000250"/>
    <property type="project" value="UniProtKB"/>
</dbReference>
<dbReference type="GO" id="GO:0051864">
    <property type="term" value="F:histone H3K36 demethylase activity"/>
    <property type="evidence" value="ECO:0000250"/>
    <property type="project" value="UniProtKB"/>
</dbReference>
<dbReference type="GO" id="GO:0140680">
    <property type="term" value="F:histone H3K36me/H3K36me2 demethylase activity"/>
    <property type="evidence" value="ECO:0007669"/>
    <property type="project" value="UniProtKB-EC"/>
</dbReference>
<dbReference type="GO" id="GO:0032453">
    <property type="term" value="F:histone H3K4 demethylase activity"/>
    <property type="evidence" value="ECO:0000318"/>
    <property type="project" value="GO_Central"/>
</dbReference>
<dbReference type="GO" id="GO:0034647">
    <property type="term" value="F:histone H3K4me/H3K4me2/H3K4me3 demethylase activity"/>
    <property type="evidence" value="ECO:0000250"/>
    <property type="project" value="UniProtKB"/>
</dbReference>
<dbReference type="GO" id="GO:0005506">
    <property type="term" value="F:iron ion binding"/>
    <property type="evidence" value="ECO:0000250"/>
    <property type="project" value="UniProtKB"/>
</dbReference>
<dbReference type="GO" id="GO:0036139">
    <property type="term" value="F:peptidyl-histidine dioxygenase activity"/>
    <property type="evidence" value="ECO:0007669"/>
    <property type="project" value="RHEA"/>
</dbReference>
<dbReference type="GO" id="GO:0045892">
    <property type="term" value="P:negative regulation of DNA-templated transcription"/>
    <property type="evidence" value="ECO:0000250"/>
    <property type="project" value="UniProtKB"/>
</dbReference>
<dbReference type="CDD" id="cd02208">
    <property type="entry name" value="cupin_RmlC-like"/>
    <property type="match status" value="1"/>
</dbReference>
<dbReference type="FunFam" id="1.10.10.1500:FF:000001">
    <property type="entry name" value="ribosomal oxygenase 1 isoform X1"/>
    <property type="match status" value="1"/>
</dbReference>
<dbReference type="FunFam" id="3.90.930.40:FF:000001">
    <property type="entry name" value="ribosomal oxygenase 1 isoform X1"/>
    <property type="match status" value="1"/>
</dbReference>
<dbReference type="Gene3D" id="3.90.930.40">
    <property type="match status" value="1"/>
</dbReference>
<dbReference type="Gene3D" id="2.60.120.650">
    <property type="entry name" value="Cupin"/>
    <property type="match status" value="2"/>
</dbReference>
<dbReference type="Gene3D" id="1.10.10.1500">
    <property type="entry name" value="JmjC domain-containing ribosomal oxygenase (ROX), dimer domain"/>
    <property type="match status" value="1"/>
</dbReference>
<dbReference type="InterPro" id="IPR003347">
    <property type="entry name" value="JmjC_dom"/>
</dbReference>
<dbReference type="InterPro" id="IPR039994">
    <property type="entry name" value="NO66-like"/>
</dbReference>
<dbReference type="InterPro" id="IPR049043">
    <property type="entry name" value="RIOX1/NO66-like_C_WH"/>
</dbReference>
<dbReference type="PANTHER" id="PTHR13096">
    <property type="entry name" value="MINA53 MYC INDUCED NUCLEAR ANTIGEN"/>
    <property type="match status" value="1"/>
</dbReference>
<dbReference type="PANTHER" id="PTHR13096:SF8">
    <property type="entry name" value="RIBOSOMAL OXYGENASE 1"/>
    <property type="match status" value="1"/>
</dbReference>
<dbReference type="Pfam" id="PF08007">
    <property type="entry name" value="JmjC_2"/>
    <property type="match status" value="2"/>
</dbReference>
<dbReference type="Pfam" id="PF21233">
    <property type="entry name" value="RIOX1_C_WH"/>
    <property type="match status" value="1"/>
</dbReference>
<dbReference type="SUPFAM" id="SSF51197">
    <property type="entry name" value="Clavaminate synthase-like"/>
    <property type="match status" value="1"/>
</dbReference>
<dbReference type="PROSITE" id="PS51184">
    <property type="entry name" value="JMJC"/>
    <property type="match status" value="1"/>
</dbReference>
<proteinExistence type="inferred from homology"/>
<sequence>MAQNIPTKRQSAFGVFVKSKVKGPTIQQTGATKTPKTPSKIRRLSIRKSTRKIKHALKGKSGSQPVAAHKDMPVTQNTGQGEEGVKLKGYKMKTSPARVQEPQRTGSPEENSIGKGNIKTNIKGSQNVQAGQKFQERIATQHPQKRKPFGIEDSDDKTPVKRVRSDTAKSVQSPAKAVDVGEVEDSTEEAEKMFEWLIHPVKKEKFFSELWEKKPLLVKRHLESYNDGWFSTEDLTKILHENDIQFGRNLDVTTYEGGQRETHNPPGRANPAVVWDYYQNGCSVRLLNPQTYSQGVWRLCSTLQEYFSSMVGANIYLTPPGTQGFAPHYDDIEAFVLQLEGNFSQEEIGEAILDVTLEPGDLLYFPRGTIHQASALPDTHSLHITVSTCQRNTWGDLMEKLVPAALTMAFSEDVEFRQALPRDYLDYMGLANADLDDPRRKAFLETLQSLLSRLVNYVPVDAGVDQKAVEFMRDCLPPVFTKNERACSIYGCRTRLEKGRVVGSVDLKTSTPVKLIRKGAARLVMEGEQVFLYHVLENARVYHGAELQPIEVPPEAAPAIEYLMHSYPEYVTVDSFPLDHQQDKIDLAMLMFEKGIIIAQEPASVDN</sequence>
<reference key="1">
    <citation type="journal article" date="2008" name="Nature">
        <title>The amphioxus genome and the evolution of the chordate karyotype.</title>
        <authorList>
            <person name="Putnam N.H."/>
            <person name="Butts T."/>
            <person name="Ferrier D.E.K."/>
            <person name="Furlong R.F."/>
            <person name="Hellsten U."/>
            <person name="Kawashima T."/>
            <person name="Robinson-Rechavi M."/>
            <person name="Shoguchi E."/>
            <person name="Terry A."/>
            <person name="Yu J.-K."/>
            <person name="Benito-Gutierrez E.L."/>
            <person name="Dubchak I."/>
            <person name="Garcia-Fernandez J."/>
            <person name="Gibson-Brown J.J."/>
            <person name="Grigoriev I.V."/>
            <person name="Horton A.C."/>
            <person name="de Jong P.J."/>
            <person name="Jurka J."/>
            <person name="Kapitonov V.V."/>
            <person name="Kohara Y."/>
            <person name="Kuroki Y."/>
            <person name="Lindquist E."/>
            <person name="Lucas S."/>
            <person name="Osoegawa K."/>
            <person name="Pennacchio L.A."/>
            <person name="Salamov A.A."/>
            <person name="Satou Y."/>
            <person name="Sauka-Spengler T."/>
            <person name="Schmutz J."/>
            <person name="Shin-I T."/>
            <person name="Toyoda A."/>
            <person name="Bronner-Fraser M."/>
            <person name="Fujiyama A."/>
            <person name="Holland L.Z."/>
            <person name="Holland P.W.H."/>
            <person name="Satoh N."/>
            <person name="Rokhsar D.S."/>
        </authorList>
    </citation>
    <scope>NUCLEOTIDE SEQUENCE [LARGE SCALE GENOMIC DNA]</scope>
    <source>
        <strain>S238N-H82</strain>
        <tissue>Testis</tissue>
    </source>
</reference>
<feature type="chain" id="PRO_0000390978" description="Bifunctional lysine-specific demethylase and histidyl-hydroxylase NO66">
    <location>
        <begin position="1"/>
        <end position="607"/>
    </location>
</feature>
<feature type="domain" description="JmjC" evidence="2">
    <location>
        <begin position="188"/>
        <end position="405"/>
    </location>
</feature>
<feature type="region of interest" description="Disordered" evidence="3">
    <location>
        <begin position="23"/>
        <end position="121"/>
    </location>
</feature>
<feature type="region of interest" description="Disordered" evidence="3">
    <location>
        <begin position="139"/>
        <end position="184"/>
    </location>
</feature>
<feature type="compositionally biased region" description="Polar residues" evidence="3">
    <location>
        <begin position="25"/>
        <end position="37"/>
    </location>
</feature>
<feature type="compositionally biased region" description="Basic residues" evidence="3">
    <location>
        <begin position="39"/>
        <end position="58"/>
    </location>
</feature>
<feature type="compositionally biased region" description="Basic and acidic residues" evidence="3">
    <location>
        <begin position="156"/>
        <end position="167"/>
    </location>
</feature>
<feature type="binding site" evidence="2">
    <location>
        <position position="328"/>
    </location>
    <ligand>
        <name>Fe cation</name>
        <dbReference type="ChEBI" id="CHEBI:24875"/>
        <note>catalytic</note>
    </ligand>
</feature>
<feature type="binding site" evidence="2">
    <location>
        <position position="330"/>
    </location>
    <ligand>
        <name>Fe cation</name>
        <dbReference type="ChEBI" id="CHEBI:24875"/>
        <note>catalytic</note>
    </ligand>
</feature>
<feature type="binding site" evidence="2">
    <location>
        <position position="371"/>
    </location>
    <ligand>
        <name>Fe cation</name>
        <dbReference type="ChEBI" id="CHEBI:24875"/>
        <note>catalytic</note>
    </ligand>
</feature>
<evidence type="ECO:0000250" key="1"/>
<evidence type="ECO:0000255" key="2">
    <source>
        <dbReference type="PROSITE-ProRule" id="PRU00538"/>
    </source>
</evidence>
<evidence type="ECO:0000256" key="3">
    <source>
        <dbReference type="SAM" id="MobiDB-lite"/>
    </source>
</evidence>
<evidence type="ECO:0000305" key="4"/>
<comment type="function">
    <text evidence="1">Oxygenase that can act as both a histone lysine demethylase and a ribosomal histidine hydroxylase. Specifically demethylates 'Lys-4' (H3K4me) and 'Lys-36' (H3K36me) of histone H3, thereby playing a central role in histone code. Also catalyzes the hydroxylation of 60S ribosomal protein L8 (By similarity).</text>
</comment>
<comment type="catalytic activity">
    <reaction>
        <text>L-histidyl-[protein] + 2-oxoglutarate + O2 = (3S)-3-hydroxy-L-histidyl-[protein] + succinate + CO2</text>
        <dbReference type="Rhea" id="RHEA:54256"/>
        <dbReference type="Rhea" id="RHEA-COMP:9745"/>
        <dbReference type="Rhea" id="RHEA-COMP:13840"/>
        <dbReference type="ChEBI" id="CHEBI:15379"/>
        <dbReference type="ChEBI" id="CHEBI:16526"/>
        <dbReference type="ChEBI" id="CHEBI:16810"/>
        <dbReference type="ChEBI" id="CHEBI:29979"/>
        <dbReference type="ChEBI" id="CHEBI:30031"/>
        <dbReference type="ChEBI" id="CHEBI:138021"/>
    </reaction>
</comment>
<comment type="catalytic activity">
    <reaction>
        <text>N(6),N(6)-dimethyl-L-lysyl(36)-[histone H3] + 2 2-oxoglutarate + 2 O2 = L-lysyl(36)-[histone H3] + 2 formaldehyde + 2 succinate + 2 CO2</text>
        <dbReference type="Rhea" id="RHEA:42032"/>
        <dbReference type="Rhea" id="RHEA-COMP:9785"/>
        <dbReference type="Rhea" id="RHEA-COMP:9787"/>
        <dbReference type="ChEBI" id="CHEBI:15379"/>
        <dbReference type="ChEBI" id="CHEBI:16526"/>
        <dbReference type="ChEBI" id="CHEBI:16810"/>
        <dbReference type="ChEBI" id="CHEBI:16842"/>
        <dbReference type="ChEBI" id="CHEBI:29969"/>
        <dbReference type="ChEBI" id="CHEBI:30031"/>
        <dbReference type="ChEBI" id="CHEBI:61976"/>
        <dbReference type="EC" id="1.14.11.27"/>
    </reaction>
</comment>
<comment type="cofactor">
    <cofactor evidence="1">
        <name>Fe(2+)</name>
        <dbReference type="ChEBI" id="CHEBI:29033"/>
    </cofactor>
    <text evidence="1">Binds 1 Fe(2+) ion per subunit.</text>
</comment>
<comment type="subcellular location">
    <subcellularLocation>
        <location evidence="1">Nucleus</location>
    </subcellularLocation>
</comment>
<comment type="similarity">
    <text evidence="4">Belongs to the ROX family. NO66 subfamily.</text>
</comment>
<accession>C3XRY1</accession>
<keyword id="KW-0156">Chromatin regulator</keyword>
<keyword id="KW-0223">Dioxygenase</keyword>
<keyword id="KW-0408">Iron</keyword>
<keyword id="KW-0479">Metal-binding</keyword>
<keyword id="KW-0539">Nucleus</keyword>
<keyword id="KW-0560">Oxidoreductase</keyword>
<keyword id="KW-1185">Reference proteome</keyword>
<keyword id="KW-0678">Repressor</keyword>
<keyword id="KW-0804">Transcription</keyword>
<keyword id="KW-0805">Transcription regulation</keyword>
<protein>
    <recommendedName>
        <fullName>Bifunctional lysine-specific demethylase and histidyl-hydroxylase NO66</fullName>
        <ecNumber>1.14.11.-</ecNumber>
        <ecNumber>1.14.11.27</ecNumber>
    </recommendedName>
    <alternativeName>
        <fullName>Histone lysine demethylase NO66</fullName>
    </alternativeName>
</protein>
<gene>
    <name type="ORF">BRAFLDRAFT_123918</name>
</gene>